<reference key="1">
    <citation type="journal article" date="2008" name="BMC Genomics">
        <title>Comparative genomic analysis of the gut bacterium Bifidobacterium longum reveals loci susceptible to deletion during pure culture growth.</title>
        <authorList>
            <person name="Lee J.H."/>
            <person name="Karamychev V.N."/>
            <person name="Kozyavkin S.A."/>
            <person name="Mills D."/>
            <person name="Pavlov A.R."/>
            <person name="Pavlova N.V."/>
            <person name="Polouchine N.N."/>
            <person name="Richardson P.M."/>
            <person name="Shakhova V.V."/>
            <person name="Slesarev A.I."/>
            <person name="Weimer B."/>
            <person name="O'Sullivan D.J."/>
        </authorList>
    </citation>
    <scope>NUCLEOTIDE SEQUENCE [LARGE SCALE GENOMIC DNA]</scope>
    <source>
        <strain>DJO10A</strain>
    </source>
</reference>
<comment type="function">
    <text evidence="1">Catalyzes the attachment of serine to tRNA(Ser). Is also able to aminoacylate tRNA(Sec) with serine, to form the misacylated tRNA L-seryl-tRNA(Sec), which will be further converted into selenocysteinyl-tRNA(Sec).</text>
</comment>
<comment type="catalytic activity">
    <reaction evidence="1">
        <text>tRNA(Ser) + L-serine + ATP = L-seryl-tRNA(Ser) + AMP + diphosphate + H(+)</text>
        <dbReference type="Rhea" id="RHEA:12292"/>
        <dbReference type="Rhea" id="RHEA-COMP:9669"/>
        <dbReference type="Rhea" id="RHEA-COMP:9703"/>
        <dbReference type="ChEBI" id="CHEBI:15378"/>
        <dbReference type="ChEBI" id="CHEBI:30616"/>
        <dbReference type="ChEBI" id="CHEBI:33019"/>
        <dbReference type="ChEBI" id="CHEBI:33384"/>
        <dbReference type="ChEBI" id="CHEBI:78442"/>
        <dbReference type="ChEBI" id="CHEBI:78533"/>
        <dbReference type="ChEBI" id="CHEBI:456215"/>
        <dbReference type="EC" id="6.1.1.11"/>
    </reaction>
</comment>
<comment type="catalytic activity">
    <reaction evidence="1">
        <text>tRNA(Sec) + L-serine + ATP = L-seryl-tRNA(Sec) + AMP + diphosphate + H(+)</text>
        <dbReference type="Rhea" id="RHEA:42580"/>
        <dbReference type="Rhea" id="RHEA-COMP:9742"/>
        <dbReference type="Rhea" id="RHEA-COMP:10128"/>
        <dbReference type="ChEBI" id="CHEBI:15378"/>
        <dbReference type="ChEBI" id="CHEBI:30616"/>
        <dbReference type="ChEBI" id="CHEBI:33019"/>
        <dbReference type="ChEBI" id="CHEBI:33384"/>
        <dbReference type="ChEBI" id="CHEBI:78442"/>
        <dbReference type="ChEBI" id="CHEBI:78533"/>
        <dbReference type="ChEBI" id="CHEBI:456215"/>
        <dbReference type="EC" id="6.1.1.11"/>
    </reaction>
</comment>
<comment type="pathway">
    <text evidence="1">Aminoacyl-tRNA biosynthesis; selenocysteinyl-tRNA(Sec) biosynthesis; L-seryl-tRNA(Sec) from L-serine and tRNA(Sec): step 1/1.</text>
</comment>
<comment type="subunit">
    <text evidence="1">Homodimer. The tRNA molecule binds across the dimer.</text>
</comment>
<comment type="subcellular location">
    <subcellularLocation>
        <location evidence="1">Cytoplasm</location>
    </subcellularLocation>
</comment>
<comment type="domain">
    <text evidence="1">Consists of two distinct domains, a catalytic core and a N-terminal extension that is involved in tRNA binding.</text>
</comment>
<comment type="similarity">
    <text evidence="1">Belongs to the class-II aminoacyl-tRNA synthetase family. Type-1 seryl-tRNA synthetase subfamily.</text>
</comment>
<evidence type="ECO:0000255" key="1">
    <source>
        <dbReference type="HAMAP-Rule" id="MF_00176"/>
    </source>
</evidence>
<organism>
    <name type="scientific">Bifidobacterium longum (strain DJO10A)</name>
    <dbReference type="NCBI Taxonomy" id="205913"/>
    <lineage>
        <taxon>Bacteria</taxon>
        <taxon>Bacillati</taxon>
        <taxon>Actinomycetota</taxon>
        <taxon>Actinomycetes</taxon>
        <taxon>Bifidobacteriales</taxon>
        <taxon>Bifidobacteriaceae</taxon>
        <taxon>Bifidobacterium</taxon>
    </lineage>
</organism>
<dbReference type="EC" id="6.1.1.11" evidence="1"/>
<dbReference type="EMBL" id="CP000605">
    <property type="protein sequence ID" value="ACD99205.1"/>
    <property type="molecule type" value="Genomic_DNA"/>
</dbReference>
<dbReference type="RefSeq" id="WP_008782953.1">
    <property type="nucleotide sequence ID" value="NZ_AABM02000016.1"/>
</dbReference>
<dbReference type="SMR" id="B3DQG7"/>
<dbReference type="KEGG" id="blj:BLD_1760"/>
<dbReference type="HOGENOM" id="CLU_023797_0_1_11"/>
<dbReference type="UniPathway" id="UPA00906">
    <property type="reaction ID" value="UER00895"/>
</dbReference>
<dbReference type="Proteomes" id="UP000002419">
    <property type="component" value="Chromosome"/>
</dbReference>
<dbReference type="GO" id="GO:0005737">
    <property type="term" value="C:cytoplasm"/>
    <property type="evidence" value="ECO:0007669"/>
    <property type="project" value="UniProtKB-SubCell"/>
</dbReference>
<dbReference type="GO" id="GO:0005524">
    <property type="term" value="F:ATP binding"/>
    <property type="evidence" value="ECO:0007669"/>
    <property type="project" value="UniProtKB-UniRule"/>
</dbReference>
<dbReference type="GO" id="GO:0004828">
    <property type="term" value="F:serine-tRNA ligase activity"/>
    <property type="evidence" value="ECO:0007669"/>
    <property type="project" value="UniProtKB-UniRule"/>
</dbReference>
<dbReference type="GO" id="GO:0016260">
    <property type="term" value="P:selenocysteine biosynthetic process"/>
    <property type="evidence" value="ECO:0007669"/>
    <property type="project" value="UniProtKB-UniRule"/>
</dbReference>
<dbReference type="GO" id="GO:0006434">
    <property type="term" value="P:seryl-tRNA aminoacylation"/>
    <property type="evidence" value="ECO:0007669"/>
    <property type="project" value="UniProtKB-UniRule"/>
</dbReference>
<dbReference type="Gene3D" id="3.30.930.10">
    <property type="entry name" value="Bira Bifunctional Protein, Domain 2"/>
    <property type="match status" value="1"/>
</dbReference>
<dbReference type="Gene3D" id="1.10.287.40">
    <property type="entry name" value="Serine-tRNA synthetase, tRNA binding domain"/>
    <property type="match status" value="1"/>
</dbReference>
<dbReference type="HAMAP" id="MF_00176">
    <property type="entry name" value="Ser_tRNA_synth_type1"/>
    <property type="match status" value="1"/>
</dbReference>
<dbReference type="InterPro" id="IPR002314">
    <property type="entry name" value="aa-tRNA-synt_IIb"/>
</dbReference>
<dbReference type="InterPro" id="IPR006195">
    <property type="entry name" value="aa-tRNA-synth_II"/>
</dbReference>
<dbReference type="InterPro" id="IPR045864">
    <property type="entry name" value="aa-tRNA-synth_II/BPL/LPL"/>
</dbReference>
<dbReference type="InterPro" id="IPR002317">
    <property type="entry name" value="Ser-tRNA-ligase_type_1"/>
</dbReference>
<dbReference type="InterPro" id="IPR015866">
    <property type="entry name" value="Ser-tRNA-synth_1_N"/>
</dbReference>
<dbReference type="InterPro" id="IPR042103">
    <property type="entry name" value="SerRS_1_N_sf"/>
</dbReference>
<dbReference type="InterPro" id="IPR010978">
    <property type="entry name" value="tRNA-bd_arm"/>
</dbReference>
<dbReference type="NCBIfam" id="TIGR00414">
    <property type="entry name" value="serS"/>
    <property type="match status" value="1"/>
</dbReference>
<dbReference type="PANTHER" id="PTHR11778">
    <property type="entry name" value="SERYL-TRNA SYNTHETASE"/>
    <property type="match status" value="1"/>
</dbReference>
<dbReference type="Pfam" id="PF02403">
    <property type="entry name" value="Seryl_tRNA_N"/>
    <property type="match status" value="1"/>
</dbReference>
<dbReference type="Pfam" id="PF00587">
    <property type="entry name" value="tRNA-synt_2b"/>
    <property type="match status" value="1"/>
</dbReference>
<dbReference type="PIRSF" id="PIRSF001529">
    <property type="entry name" value="Ser-tRNA-synth_IIa"/>
    <property type="match status" value="1"/>
</dbReference>
<dbReference type="PRINTS" id="PR00981">
    <property type="entry name" value="TRNASYNTHSER"/>
</dbReference>
<dbReference type="SUPFAM" id="SSF55681">
    <property type="entry name" value="Class II aaRS and biotin synthetases"/>
    <property type="match status" value="1"/>
</dbReference>
<dbReference type="SUPFAM" id="SSF46589">
    <property type="entry name" value="tRNA-binding arm"/>
    <property type="match status" value="1"/>
</dbReference>
<dbReference type="PROSITE" id="PS50862">
    <property type="entry name" value="AA_TRNA_LIGASE_II"/>
    <property type="match status" value="1"/>
</dbReference>
<proteinExistence type="inferred from homology"/>
<accession>B3DQG7</accession>
<gene>
    <name evidence="1" type="primary">serS</name>
    <name type="ordered locus">BLD_1760</name>
</gene>
<sequence length="428" mass="47956">MLDIQFIREHTDIVKESQRKRGESVELVDEVLSSDTARREALKAFEEARAQQKEIGKKVASAPADEKAKLIAETKELSQKVSEYKSKADSAAEEYTTAMWKLSNIVEPEAPEGGEDDYVVVKKVGQIRDFAAEGFEPKDHLTLGTGVAGIDMRRGVKVGGSRFYFLRGQVARMQIAMLTMAVDQAEEHGFTLAITPTLVRPEVMRGTGFLNSHADEIYRLREPDDQYLVGTSEVALAGMHENEILDLGNGPLRYCGWSSCYRREAGAAGKDTSGIIRVHQFDKVEMFVYAKQEDSYKEHEHLLAMEQEMLAKVEVPYRIIDTAAGDLGSSAARKFDCEAWVPTQGRYRELTSTSNCTEYQARRLNIRERMEDGGTRPVSTLNGTLATTRWLVAIMENHQQKDGSIEIPQAMRAYMGGKEVIEPTKWEA</sequence>
<name>SYS_BIFLD</name>
<feature type="chain" id="PRO_1000098033" description="Serine--tRNA ligase">
    <location>
        <begin position="1"/>
        <end position="428"/>
    </location>
</feature>
<feature type="binding site" evidence="1">
    <location>
        <begin position="231"/>
        <end position="233"/>
    </location>
    <ligand>
        <name>L-serine</name>
        <dbReference type="ChEBI" id="CHEBI:33384"/>
    </ligand>
</feature>
<feature type="binding site" evidence="1">
    <location>
        <begin position="262"/>
        <end position="264"/>
    </location>
    <ligand>
        <name>ATP</name>
        <dbReference type="ChEBI" id="CHEBI:30616"/>
    </ligand>
</feature>
<feature type="binding site" evidence="1">
    <location>
        <position position="278"/>
    </location>
    <ligand>
        <name>ATP</name>
        <dbReference type="ChEBI" id="CHEBI:30616"/>
    </ligand>
</feature>
<feature type="binding site" evidence="1">
    <location>
        <position position="285"/>
    </location>
    <ligand>
        <name>L-serine</name>
        <dbReference type="ChEBI" id="CHEBI:33384"/>
    </ligand>
</feature>
<feature type="binding site" evidence="1">
    <location>
        <begin position="349"/>
        <end position="352"/>
    </location>
    <ligand>
        <name>ATP</name>
        <dbReference type="ChEBI" id="CHEBI:30616"/>
    </ligand>
</feature>
<feature type="binding site" evidence="1">
    <location>
        <position position="384"/>
    </location>
    <ligand>
        <name>L-serine</name>
        <dbReference type="ChEBI" id="CHEBI:33384"/>
    </ligand>
</feature>
<protein>
    <recommendedName>
        <fullName evidence="1">Serine--tRNA ligase</fullName>
        <ecNumber evidence="1">6.1.1.11</ecNumber>
    </recommendedName>
    <alternativeName>
        <fullName evidence="1">Seryl-tRNA synthetase</fullName>
        <shortName evidence="1">SerRS</shortName>
    </alternativeName>
    <alternativeName>
        <fullName evidence="1">Seryl-tRNA(Ser/Sec) synthetase</fullName>
    </alternativeName>
</protein>
<keyword id="KW-0030">Aminoacyl-tRNA synthetase</keyword>
<keyword id="KW-0067">ATP-binding</keyword>
<keyword id="KW-0963">Cytoplasm</keyword>
<keyword id="KW-0436">Ligase</keyword>
<keyword id="KW-0547">Nucleotide-binding</keyword>
<keyword id="KW-0648">Protein biosynthesis</keyword>